<reference key="1">
    <citation type="journal article" date="2003" name="Proc. Natl. Acad. Sci. U.S.A.">
        <title>Reductive genome evolution in Buchnera aphidicola.</title>
        <authorList>
            <person name="van Ham R.C.H.J."/>
            <person name="Kamerbeek J."/>
            <person name="Palacios C."/>
            <person name="Rausell C."/>
            <person name="Abascal F."/>
            <person name="Bastolla U."/>
            <person name="Fernandez J.M."/>
            <person name="Jimenez L."/>
            <person name="Postigo M."/>
            <person name="Silva F.J."/>
            <person name="Tamames J."/>
            <person name="Viguera E."/>
            <person name="Latorre A."/>
            <person name="Valencia A."/>
            <person name="Moran F."/>
            <person name="Moya A."/>
        </authorList>
    </citation>
    <scope>NUCLEOTIDE SEQUENCE [LARGE SCALE GENOMIC DNA]</scope>
    <source>
        <strain>Bp</strain>
    </source>
</reference>
<feature type="chain" id="PRO_0000156912" description="UPF0056 membrane protein bbp_399">
    <location>
        <begin position="1"/>
        <end position="199"/>
    </location>
</feature>
<feature type="transmembrane region" description="Helical" evidence="1">
    <location>
        <begin position="7"/>
        <end position="29"/>
    </location>
</feature>
<feature type="transmembrane region" description="Helical" evidence="1">
    <location>
        <begin position="39"/>
        <end position="58"/>
    </location>
</feature>
<feature type="transmembrane region" description="Helical" evidence="1">
    <location>
        <begin position="71"/>
        <end position="93"/>
    </location>
</feature>
<feature type="transmembrane region" description="Helical" evidence="1">
    <location>
        <begin position="108"/>
        <end position="130"/>
    </location>
</feature>
<feature type="transmembrane region" description="Helical" evidence="1">
    <location>
        <begin position="137"/>
        <end position="156"/>
    </location>
</feature>
<feature type="transmembrane region" description="Helical" evidence="1">
    <location>
        <begin position="176"/>
        <end position="198"/>
    </location>
</feature>
<name>Y399_BUCBP</name>
<proteinExistence type="inferred from homology"/>
<sequence>MKEIISVTILLILIMDPLGNLPIFMSILKHLEPQRRKKILIREMMIALLIMLLFLFAGEKILIFLNLRAETVSVSGGIILFLIAIKMIFPTYESKKKSGNIIKREEPFLVPLAIPLVAGPSLLATLMLLSHQYPKKILYLIGSLLIAWMITVVILLLSDIFLRLFGSKGVNALERLMGLILIMLSTQMFLDGIKSWFYI</sequence>
<organism>
    <name type="scientific">Buchnera aphidicola subsp. Baizongia pistaciae (strain Bp)</name>
    <dbReference type="NCBI Taxonomy" id="224915"/>
    <lineage>
        <taxon>Bacteria</taxon>
        <taxon>Pseudomonadati</taxon>
        <taxon>Pseudomonadota</taxon>
        <taxon>Gammaproteobacteria</taxon>
        <taxon>Enterobacterales</taxon>
        <taxon>Erwiniaceae</taxon>
        <taxon>Buchnera</taxon>
    </lineage>
</organism>
<gene>
    <name type="ordered locus">bbp_399</name>
</gene>
<dbReference type="EMBL" id="AE016826">
    <property type="protein sequence ID" value="AAO27111.1"/>
    <property type="molecule type" value="Genomic_DNA"/>
</dbReference>
<dbReference type="RefSeq" id="WP_011091512.1">
    <property type="nucleotide sequence ID" value="NC_004545.1"/>
</dbReference>
<dbReference type="KEGG" id="bab:bbp_399"/>
<dbReference type="eggNOG" id="COG2095">
    <property type="taxonomic scope" value="Bacteria"/>
</dbReference>
<dbReference type="HOGENOM" id="CLU_079909_1_1_6"/>
<dbReference type="OrthoDB" id="21094at2"/>
<dbReference type="Proteomes" id="UP000000601">
    <property type="component" value="Chromosome"/>
</dbReference>
<dbReference type="GO" id="GO:0005886">
    <property type="term" value="C:plasma membrane"/>
    <property type="evidence" value="ECO:0007669"/>
    <property type="project" value="UniProtKB-SubCell"/>
</dbReference>
<dbReference type="InterPro" id="IPR002771">
    <property type="entry name" value="Multi_antbiot-R_MarC"/>
</dbReference>
<dbReference type="NCBIfam" id="TIGR00427">
    <property type="entry name" value="NAAT family transporter"/>
    <property type="match status" value="1"/>
</dbReference>
<dbReference type="NCBIfam" id="NF008010">
    <property type="entry name" value="PRK10739.1"/>
    <property type="match status" value="1"/>
</dbReference>
<dbReference type="PANTHER" id="PTHR33508:SF10">
    <property type="entry name" value="UPF0056 INNER MEMBRANE PROTEIN YHGN"/>
    <property type="match status" value="1"/>
</dbReference>
<dbReference type="PANTHER" id="PTHR33508">
    <property type="entry name" value="UPF0056 MEMBRANE PROTEIN YHCE"/>
    <property type="match status" value="1"/>
</dbReference>
<dbReference type="Pfam" id="PF01914">
    <property type="entry name" value="MarC"/>
    <property type="match status" value="1"/>
</dbReference>
<evidence type="ECO:0000255" key="1"/>
<evidence type="ECO:0000305" key="2"/>
<accession>Q89AB7</accession>
<keyword id="KW-1003">Cell membrane</keyword>
<keyword id="KW-0472">Membrane</keyword>
<keyword id="KW-1185">Reference proteome</keyword>
<keyword id="KW-0812">Transmembrane</keyword>
<keyword id="KW-1133">Transmembrane helix</keyword>
<comment type="subcellular location">
    <subcellularLocation>
        <location evidence="2">Cell membrane</location>
        <topology evidence="2">Multi-pass membrane protein</topology>
    </subcellularLocation>
</comment>
<comment type="similarity">
    <text evidence="2">Belongs to the UPF0056 (MarC) family.</text>
</comment>
<protein>
    <recommendedName>
        <fullName>UPF0056 membrane protein bbp_399</fullName>
    </recommendedName>
</protein>